<dbReference type="EC" id="6.1.1.17" evidence="1"/>
<dbReference type="EMBL" id="CP000675">
    <property type="protein sequence ID" value="ABQ55319.1"/>
    <property type="molecule type" value="Genomic_DNA"/>
</dbReference>
<dbReference type="RefSeq" id="WP_011946808.1">
    <property type="nucleotide sequence ID" value="NZ_JAPMSS010000005.1"/>
</dbReference>
<dbReference type="SMR" id="A5ID69"/>
<dbReference type="KEGG" id="lpc:LPC_1365"/>
<dbReference type="HOGENOM" id="CLU_015768_6_0_6"/>
<dbReference type="GO" id="GO:0005829">
    <property type="term" value="C:cytosol"/>
    <property type="evidence" value="ECO:0007669"/>
    <property type="project" value="TreeGrafter"/>
</dbReference>
<dbReference type="GO" id="GO:0005524">
    <property type="term" value="F:ATP binding"/>
    <property type="evidence" value="ECO:0007669"/>
    <property type="project" value="UniProtKB-UniRule"/>
</dbReference>
<dbReference type="GO" id="GO:0004818">
    <property type="term" value="F:glutamate-tRNA ligase activity"/>
    <property type="evidence" value="ECO:0007669"/>
    <property type="project" value="UniProtKB-UniRule"/>
</dbReference>
<dbReference type="GO" id="GO:0000049">
    <property type="term" value="F:tRNA binding"/>
    <property type="evidence" value="ECO:0007669"/>
    <property type="project" value="InterPro"/>
</dbReference>
<dbReference type="GO" id="GO:0008270">
    <property type="term" value="F:zinc ion binding"/>
    <property type="evidence" value="ECO:0007669"/>
    <property type="project" value="InterPro"/>
</dbReference>
<dbReference type="GO" id="GO:0006424">
    <property type="term" value="P:glutamyl-tRNA aminoacylation"/>
    <property type="evidence" value="ECO:0007669"/>
    <property type="project" value="UniProtKB-UniRule"/>
</dbReference>
<dbReference type="CDD" id="cd00808">
    <property type="entry name" value="GluRS_core"/>
    <property type="match status" value="1"/>
</dbReference>
<dbReference type="FunFam" id="3.40.50.620:FF:000007">
    <property type="entry name" value="Glutamate--tRNA ligase"/>
    <property type="match status" value="1"/>
</dbReference>
<dbReference type="Gene3D" id="1.10.10.350">
    <property type="match status" value="1"/>
</dbReference>
<dbReference type="Gene3D" id="3.40.50.620">
    <property type="entry name" value="HUPs"/>
    <property type="match status" value="1"/>
</dbReference>
<dbReference type="HAMAP" id="MF_00022">
    <property type="entry name" value="Glu_tRNA_synth_type1"/>
    <property type="match status" value="1"/>
</dbReference>
<dbReference type="InterPro" id="IPR045462">
    <property type="entry name" value="aa-tRNA-synth_I_cd-bd"/>
</dbReference>
<dbReference type="InterPro" id="IPR020751">
    <property type="entry name" value="aa-tRNA-synth_I_codon-bd_sub2"/>
</dbReference>
<dbReference type="InterPro" id="IPR001412">
    <property type="entry name" value="aa-tRNA-synth_I_CS"/>
</dbReference>
<dbReference type="InterPro" id="IPR008925">
    <property type="entry name" value="aa_tRNA-synth_I_cd-bd_sf"/>
</dbReference>
<dbReference type="InterPro" id="IPR004527">
    <property type="entry name" value="Glu-tRNA-ligase_bac/mito"/>
</dbReference>
<dbReference type="InterPro" id="IPR000924">
    <property type="entry name" value="Glu/Gln-tRNA-synth"/>
</dbReference>
<dbReference type="InterPro" id="IPR020058">
    <property type="entry name" value="Glu/Gln-tRNA-synth_Ib_cat-dom"/>
</dbReference>
<dbReference type="InterPro" id="IPR049940">
    <property type="entry name" value="GluQ/Sye"/>
</dbReference>
<dbReference type="InterPro" id="IPR033910">
    <property type="entry name" value="GluRS_core"/>
</dbReference>
<dbReference type="InterPro" id="IPR014729">
    <property type="entry name" value="Rossmann-like_a/b/a_fold"/>
</dbReference>
<dbReference type="NCBIfam" id="TIGR00464">
    <property type="entry name" value="gltX_bact"/>
    <property type="match status" value="1"/>
</dbReference>
<dbReference type="PANTHER" id="PTHR43311">
    <property type="entry name" value="GLUTAMATE--TRNA LIGASE"/>
    <property type="match status" value="1"/>
</dbReference>
<dbReference type="PANTHER" id="PTHR43311:SF2">
    <property type="entry name" value="GLUTAMATE--TRNA LIGASE, MITOCHONDRIAL-RELATED"/>
    <property type="match status" value="1"/>
</dbReference>
<dbReference type="Pfam" id="PF19269">
    <property type="entry name" value="Anticodon_2"/>
    <property type="match status" value="1"/>
</dbReference>
<dbReference type="Pfam" id="PF00749">
    <property type="entry name" value="tRNA-synt_1c"/>
    <property type="match status" value="1"/>
</dbReference>
<dbReference type="PRINTS" id="PR00987">
    <property type="entry name" value="TRNASYNTHGLU"/>
</dbReference>
<dbReference type="SUPFAM" id="SSF48163">
    <property type="entry name" value="An anticodon-binding domain of class I aminoacyl-tRNA synthetases"/>
    <property type="match status" value="1"/>
</dbReference>
<dbReference type="SUPFAM" id="SSF52374">
    <property type="entry name" value="Nucleotidylyl transferase"/>
    <property type="match status" value="1"/>
</dbReference>
<dbReference type="PROSITE" id="PS00178">
    <property type="entry name" value="AA_TRNA_LIGASE_I"/>
    <property type="match status" value="1"/>
</dbReference>
<accession>A5ID69</accession>
<organism>
    <name type="scientific">Legionella pneumophila (strain Corby)</name>
    <dbReference type="NCBI Taxonomy" id="400673"/>
    <lineage>
        <taxon>Bacteria</taxon>
        <taxon>Pseudomonadati</taxon>
        <taxon>Pseudomonadota</taxon>
        <taxon>Gammaproteobacteria</taxon>
        <taxon>Legionellales</taxon>
        <taxon>Legionellaceae</taxon>
        <taxon>Legionella</taxon>
    </lineage>
</organism>
<sequence length="470" mass="53533">MTVRTRFAPSPTGFLHVGGVRTALFSWLYAKHHNGQFILRIEDTDRERSTQESVQAILDGMAWLGLNFDEGPYYQTERYARYQQVAQQLLKEGKAYRCQCSKERLEALREAQLAAKEKPRYDGHCRNQTLPDSGVPYVIRFRNPDAGIVSFHDEVYGDIHVDNSELDDLILVRSDGHPTYNFAVVIDDWDMKITHVIRGDDHINNTPRQINLFKALDAPVPVFAHLPMILGEDGKRLSKRHGAVSVLQFKELGVLPHALLNYLVRLGWSHGDQEIFSVQEMITSFDLKNVSRGVSSFNYDKLYWLNQHYQKSDSPESVANALQWHFEQAGIDLNQGPDLKDLVAVQAERCKSLAEMCQISQYFYTDTIEYNEDAVKKHLRPVVLEPLMVLHERLKALDEWKNDKIQECINDVSLQFDLNLGKIAQPLRVAVTGSGTSPSIDMTLALLGKNKSIKRLEDALEKIRARASAV</sequence>
<gene>
    <name evidence="1" type="primary">gltX</name>
    <name type="ordered locus">LPC_1365</name>
</gene>
<evidence type="ECO:0000255" key="1">
    <source>
        <dbReference type="HAMAP-Rule" id="MF_00022"/>
    </source>
</evidence>
<keyword id="KW-0030">Aminoacyl-tRNA synthetase</keyword>
<keyword id="KW-0067">ATP-binding</keyword>
<keyword id="KW-0963">Cytoplasm</keyword>
<keyword id="KW-0436">Ligase</keyword>
<keyword id="KW-0547">Nucleotide-binding</keyword>
<keyword id="KW-0648">Protein biosynthesis</keyword>
<comment type="function">
    <text evidence="1">Catalyzes the attachment of glutamate to tRNA(Glu) in a two-step reaction: glutamate is first activated by ATP to form Glu-AMP and then transferred to the acceptor end of tRNA(Glu).</text>
</comment>
<comment type="catalytic activity">
    <reaction evidence="1">
        <text>tRNA(Glu) + L-glutamate + ATP = L-glutamyl-tRNA(Glu) + AMP + diphosphate</text>
        <dbReference type="Rhea" id="RHEA:23540"/>
        <dbReference type="Rhea" id="RHEA-COMP:9663"/>
        <dbReference type="Rhea" id="RHEA-COMP:9680"/>
        <dbReference type="ChEBI" id="CHEBI:29985"/>
        <dbReference type="ChEBI" id="CHEBI:30616"/>
        <dbReference type="ChEBI" id="CHEBI:33019"/>
        <dbReference type="ChEBI" id="CHEBI:78442"/>
        <dbReference type="ChEBI" id="CHEBI:78520"/>
        <dbReference type="ChEBI" id="CHEBI:456215"/>
        <dbReference type="EC" id="6.1.1.17"/>
    </reaction>
</comment>
<comment type="subunit">
    <text evidence="1">Monomer.</text>
</comment>
<comment type="subcellular location">
    <subcellularLocation>
        <location evidence="1">Cytoplasm</location>
    </subcellularLocation>
</comment>
<comment type="similarity">
    <text evidence="1">Belongs to the class-I aminoacyl-tRNA synthetase family. Glutamate--tRNA ligase type 1 subfamily.</text>
</comment>
<protein>
    <recommendedName>
        <fullName evidence="1">Glutamate--tRNA ligase</fullName>
        <ecNumber evidence="1">6.1.1.17</ecNumber>
    </recommendedName>
    <alternativeName>
        <fullName evidence="1">Glutamyl-tRNA synthetase</fullName>
        <shortName evidence="1">GluRS</shortName>
    </alternativeName>
</protein>
<reference key="1">
    <citation type="submission" date="2006-11" db="EMBL/GenBank/DDBJ databases">
        <title>Identification and characterization of a new conjugation/ type IVA secretion system (trb/tra) of L. pneumophila Corby localized on a mobile genomic island.</title>
        <authorList>
            <person name="Gloeckner G."/>
            <person name="Albert-Weissenberger C."/>
            <person name="Weinmann E."/>
            <person name="Jacobi S."/>
            <person name="Schunder E."/>
            <person name="Steinert M."/>
            <person name="Buchrieser C."/>
            <person name="Hacker J."/>
            <person name="Heuner K."/>
        </authorList>
    </citation>
    <scope>NUCLEOTIDE SEQUENCE [LARGE SCALE GENOMIC DNA]</scope>
    <source>
        <strain>Corby</strain>
    </source>
</reference>
<feature type="chain" id="PRO_1000001917" description="Glutamate--tRNA ligase">
    <location>
        <begin position="1"/>
        <end position="470"/>
    </location>
</feature>
<feature type="short sequence motif" description="'HIGH' region" evidence="1">
    <location>
        <begin position="9"/>
        <end position="19"/>
    </location>
</feature>
<feature type="short sequence motif" description="'KMSKS' region" evidence="1">
    <location>
        <begin position="236"/>
        <end position="240"/>
    </location>
</feature>
<feature type="binding site" evidence="1">
    <location>
        <position position="239"/>
    </location>
    <ligand>
        <name>ATP</name>
        <dbReference type="ChEBI" id="CHEBI:30616"/>
    </ligand>
</feature>
<proteinExistence type="inferred from homology"/>
<name>SYE_LEGPC</name>